<comment type="function">
    <text evidence="1">Nucleoside triphosphate pyrophosphatase that hydrolyzes dTTP and UTP. May have a dual role in cell division arrest and in preventing the incorporation of modified nucleotides into cellular nucleic acids.</text>
</comment>
<comment type="catalytic activity">
    <reaction evidence="1">
        <text>dTTP + H2O = dTMP + diphosphate + H(+)</text>
        <dbReference type="Rhea" id="RHEA:28534"/>
        <dbReference type="ChEBI" id="CHEBI:15377"/>
        <dbReference type="ChEBI" id="CHEBI:15378"/>
        <dbReference type="ChEBI" id="CHEBI:33019"/>
        <dbReference type="ChEBI" id="CHEBI:37568"/>
        <dbReference type="ChEBI" id="CHEBI:63528"/>
        <dbReference type="EC" id="3.6.1.9"/>
    </reaction>
</comment>
<comment type="catalytic activity">
    <reaction evidence="1">
        <text>UTP + H2O = UMP + diphosphate + H(+)</text>
        <dbReference type="Rhea" id="RHEA:29395"/>
        <dbReference type="ChEBI" id="CHEBI:15377"/>
        <dbReference type="ChEBI" id="CHEBI:15378"/>
        <dbReference type="ChEBI" id="CHEBI:33019"/>
        <dbReference type="ChEBI" id="CHEBI:46398"/>
        <dbReference type="ChEBI" id="CHEBI:57865"/>
        <dbReference type="EC" id="3.6.1.9"/>
    </reaction>
</comment>
<comment type="cofactor">
    <cofactor evidence="1">
        <name>a divalent metal cation</name>
        <dbReference type="ChEBI" id="CHEBI:60240"/>
    </cofactor>
</comment>
<comment type="subcellular location">
    <subcellularLocation>
        <location evidence="1">Cytoplasm</location>
    </subcellularLocation>
</comment>
<comment type="similarity">
    <text evidence="1">Belongs to the Maf family. YhdE subfamily.</text>
</comment>
<comment type="sequence caution" evidence="2">
    <conflict type="erroneous initiation">
        <sequence resource="EMBL-CDS" id="AAO36575"/>
    </conflict>
</comment>
<gene>
    <name type="ordered locus">CTC_02076</name>
</gene>
<protein>
    <recommendedName>
        <fullName evidence="1">dTTP/UTP pyrophosphatase</fullName>
        <shortName evidence="1">dTTPase/UTPase</shortName>
        <ecNumber evidence="1">3.6.1.9</ecNumber>
    </recommendedName>
    <alternativeName>
        <fullName evidence="1">Nucleoside triphosphate pyrophosphatase</fullName>
    </alternativeName>
    <alternativeName>
        <fullName evidence="1">Nucleotide pyrophosphatase</fullName>
        <shortName evidence="1">Nucleotide PPase</shortName>
    </alternativeName>
</protein>
<reference key="1">
    <citation type="journal article" date="2003" name="Proc. Natl. Acad. Sci. U.S.A.">
        <title>The genome sequence of Clostridium tetani, the causative agent of tetanus disease.</title>
        <authorList>
            <person name="Brueggemann H."/>
            <person name="Baeumer S."/>
            <person name="Fricke W.F."/>
            <person name="Wiezer A."/>
            <person name="Liesegang H."/>
            <person name="Decker I."/>
            <person name="Herzberg C."/>
            <person name="Martinez-Arias R."/>
            <person name="Merkl R."/>
            <person name="Henne A."/>
            <person name="Gottschalk G."/>
        </authorList>
    </citation>
    <scope>NUCLEOTIDE SEQUENCE [LARGE SCALE GENOMIC DNA]</scope>
    <source>
        <strain>Massachusetts / E88</strain>
    </source>
</reference>
<accession>Q892M0</accession>
<name>NTPPA_CLOTE</name>
<sequence length="192" mass="21586">MNFILASSSERRKELLKRIVENFEVIPSDYDEKEVAFNGNCSEYVMELSKGKALNVASKLKRDSGIIIASDTIVYFNGEVLGKPSSKEHAYEMLKSLSGEVHEVYSGIVIYDLSSKKIKADYSCSKVKFSNLDDKMIREYIKTGEPMDKAGSYGIQGYGGIFVEKIHGCYYNIVGLPINKLYFLLKEMGVNL</sequence>
<dbReference type="EC" id="3.6.1.9" evidence="1"/>
<dbReference type="EMBL" id="AE015927">
    <property type="protein sequence ID" value="AAO36575.1"/>
    <property type="status" value="ALT_INIT"/>
    <property type="molecule type" value="Genomic_DNA"/>
</dbReference>
<dbReference type="RefSeq" id="WP_035109104.1">
    <property type="nucleotide sequence ID" value="NC_004557.1"/>
</dbReference>
<dbReference type="SMR" id="Q892M0"/>
<dbReference type="STRING" id="212717.CTC_02076"/>
<dbReference type="GeneID" id="24253253"/>
<dbReference type="KEGG" id="ctc:CTC_02076"/>
<dbReference type="HOGENOM" id="CLU_040416_0_0_9"/>
<dbReference type="OrthoDB" id="9807767at2"/>
<dbReference type="Proteomes" id="UP000001412">
    <property type="component" value="Chromosome"/>
</dbReference>
<dbReference type="GO" id="GO:0005737">
    <property type="term" value="C:cytoplasm"/>
    <property type="evidence" value="ECO:0007669"/>
    <property type="project" value="UniProtKB-SubCell"/>
</dbReference>
<dbReference type="GO" id="GO:0036218">
    <property type="term" value="F:dTTP diphosphatase activity"/>
    <property type="evidence" value="ECO:0007669"/>
    <property type="project" value="RHEA"/>
</dbReference>
<dbReference type="GO" id="GO:0036221">
    <property type="term" value="F:UTP diphosphatase activity"/>
    <property type="evidence" value="ECO:0007669"/>
    <property type="project" value="RHEA"/>
</dbReference>
<dbReference type="GO" id="GO:0009117">
    <property type="term" value="P:nucleotide metabolic process"/>
    <property type="evidence" value="ECO:0007669"/>
    <property type="project" value="UniProtKB-KW"/>
</dbReference>
<dbReference type="CDD" id="cd00555">
    <property type="entry name" value="Maf"/>
    <property type="match status" value="1"/>
</dbReference>
<dbReference type="Gene3D" id="3.90.950.10">
    <property type="match status" value="1"/>
</dbReference>
<dbReference type="HAMAP" id="MF_00528">
    <property type="entry name" value="Maf"/>
    <property type="match status" value="1"/>
</dbReference>
<dbReference type="InterPro" id="IPR029001">
    <property type="entry name" value="ITPase-like_fam"/>
</dbReference>
<dbReference type="InterPro" id="IPR003697">
    <property type="entry name" value="Maf-like"/>
</dbReference>
<dbReference type="NCBIfam" id="TIGR00172">
    <property type="entry name" value="maf"/>
    <property type="match status" value="1"/>
</dbReference>
<dbReference type="NCBIfam" id="NF000867">
    <property type="entry name" value="PRK00078.1"/>
    <property type="match status" value="1"/>
</dbReference>
<dbReference type="PANTHER" id="PTHR43213">
    <property type="entry name" value="BIFUNCTIONAL DTTP/UTP PYROPHOSPHATASE/METHYLTRANSFERASE PROTEIN-RELATED"/>
    <property type="match status" value="1"/>
</dbReference>
<dbReference type="PANTHER" id="PTHR43213:SF5">
    <property type="entry name" value="BIFUNCTIONAL DTTP_UTP PYROPHOSPHATASE_METHYLTRANSFERASE PROTEIN-RELATED"/>
    <property type="match status" value="1"/>
</dbReference>
<dbReference type="Pfam" id="PF02545">
    <property type="entry name" value="Maf"/>
    <property type="match status" value="1"/>
</dbReference>
<dbReference type="PIRSF" id="PIRSF006305">
    <property type="entry name" value="Maf"/>
    <property type="match status" value="1"/>
</dbReference>
<dbReference type="SUPFAM" id="SSF52972">
    <property type="entry name" value="ITPase-like"/>
    <property type="match status" value="1"/>
</dbReference>
<feature type="chain" id="PRO_0000123016" description="dTTP/UTP pyrophosphatase">
    <location>
        <begin position="1"/>
        <end position="192"/>
    </location>
</feature>
<feature type="active site" description="Proton acceptor" evidence="1">
    <location>
        <position position="71"/>
    </location>
</feature>
<feature type="site" description="Important for substrate specificity" evidence="1">
    <location>
        <position position="11"/>
    </location>
</feature>
<feature type="site" description="Important for substrate specificity" evidence="1">
    <location>
        <position position="72"/>
    </location>
</feature>
<feature type="site" description="Important for substrate specificity" evidence="1">
    <location>
        <position position="156"/>
    </location>
</feature>
<organism>
    <name type="scientific">Clostridium tetani (strain Massachusetts / E88)</name>
    <dbReference type="NCBI Taxonomy" id="212717"/>
    <lineage>
        <taxon>Bacteria</taxon>
        <taxon>Bacillati</taxon>
        <taxon>Bacillota</taxon>
        <taxon>Clostridia</taxon>
        <taxon>Eubacteriales</taxon>
        <taxon>Clostridiaceae</taxon>
        <taxon>Clostridium</taxon>
    </lineage>
</organism>
<proteinExistence type="inferred from homology"/>
<keyword id="KW-0963">Cytoplasm</keyword>
<keyword id="KW-0378">Hydrolase</keyword>
<keyword id="KW-0546">Nucleotide metabolism</keyword>
<keyword id="KW-1185">Reference proteome</keyword>
<evidence type="ECO:0000255" key="1">
    <source>
        <dbReference type="HAMAP-Rule" id="MF_00528"/>
    </source>
</evidence>
<evidence type="ECO:0000305" key="2"/>